<name>RPB2_ASFWA</name>
<evidence type="ECO:0000250" key="1">
    <source>
        <dbReference type="UniProtKB" id="P30876"/>
    </source>
</evidence>
<evidence type="ECO:0000250" key="2">
    <source>
        <dbReference type="UniProtKB" id="P42487"/>
    </source>
</evidence>
<evidence type="ECO:0000305" key="3"/>
<organism>
    <name type="scientific">African swine fever virus (isolate Warthog/Namibia/Wart80/1980)</name>
    <name type="common">ASFV</name>
    <dbReference type="NCBI Taxonomy" id="561444"/>
    <lineage>
        <taxon>Viruses</taxon>
        <taxon>Varidnaviria</taxon>
        <taxon>Bamfordvirae</taxon>
        <taxon>Nucleocytoviricota</taxon>
        <taxon>Pokkesviricetes</taxon>
        <taxon>Asfuvirales</taxon>
        <taxon>Asfarviridae</taxon>
        <taxon>Asfivirus</taxon>
        <taxon>African swine fever virus</taxon>
    </lineage>
</organism>
<organismHost>
    <name type="scientific">Ornithodoros</name>
    <name type="common">relapsing fever ticks</name>
    <dbReference type="NCBI Taxonomy" id="6937"/>
</organismHost>
<organismHost>
    <name type="scientific">Phacochoerus aethiopicus</name>
    <name type="common">Warthog</name>
    <dbReference type="NCBI Taxonomy" id="85517"/>
</organismHost>
<organismHost>
    <name type="scientific">Phacochoerus africanus</name>
    <name type="common">Warthog</name>
    <dbReference type="NCBI Taxonomy" id="41426"/>
</organismHost>
<organismHost>
    <name type="scientific">Potamochoerus larvatus</name>
    <name type="common">Bushpig</name>
    <dbReference type="NCBI Taxonomy" id="273792"/>
</organismHost>
<organismHost>
    <name type="scientific">Sus scrofa</name>
    <name type="common">Pig</name>
    <dbReference type="NCBI Taxonomy" id="9823"/>
</organismHost>
<sequence>MEPLRPQITYGPIETVDNEELTEADMLSFISAAVNSTGLIGYNIKSFDDLMDNGIPQIVKQMFNVDITYKDQRDHTEIDKLRESVQIQFNFTDVNIERPQHRNYSQGNKINLLPNKARLCGLSYSGPVNLAAEVILTAHYSNGRQEVKRASIPPFQVSTFPIMRGSNRCHTHHLSKTAKKEIGEDPNEPGGYFIARGGEWVVDLLENIRFNTLHIHYHTMQQGNNEIIRGEFISQPGGAFENSSQIIIRYMTTGAITIEINSTKFSKLRIPWYLIFRMFGMTGDDSIIEQVVFDLESNSLVNTFMIEILEKSIHVLDPIFQPVQHELNREKIIQFLSEKVSKFVSNPSAYKSDENAVQYLNERQLTILDKILLPHMGQTADTRVRKLRFLGLLIHKILLVIMNVFPPTDRDSYRTKRVHGSGVSLAKAFKAIFNTSVIAPIINGFKELLKQTAFEELTQRNIIEAFSAALSKNTASDLNRSMEQSIISGNKTIMVRQRPIVNRVSTQSLERKNLLNTISALRTVNTHNTTNASKQTERADMMRRVHASYPGYICVAQSADTGEKVGMSKQLAITANVCTAGEVLSLKQRLLSDPAIQQLADVSNKDIVRKGLARVFINGEWIGCCTNAFELAQRYRMLRREGKIVHPHTTIYWDSMVDEVEFWLDVGRLTRPLLIVDNNIEKYNQACYKAAEARKKGDKDWEKHKIPFVQNTRFTSQMAKDILAGTLTLEDLVAQGICEFITPEEAENCLVAFSIIELRKHKHDVTRRFTHVDVPQAILGLAALVSPYANCTQPARVTYETNQGRQTGGWYCFSWPYRVDMNRFFQFYNEMPLVKTIAHNYVIPNGLNTIVAYMIYGGYNQEDSVIVSQSFIDRGGFAGTFYREEKVELESDIESFGKPDPLITKNLKPGANYEKLVDGFVPVGTVVKKGDIIIGKVAKIRGEKDELNKYIDRSVMYGFDEPAVVDAVMRPHGPNDEIFGLMRLRYERNLNIGDKMSSRSGNKGIAALALPTSDMPFTEDGLQPDLIVNPHSHPSRMTNGQMIETTVGLANALQGVVTDGTAFLPINVQLLSERLAQEGLRFNGCQKMFNGQTGEYFDAAIFIGPTYHQRLQKFVLDDRYAVASYGPTDALTGQPLDGKRSHGGLRLGEMEHWVLTAQGAMQTIIEKSHDDSDGCISYVCRNCGEPAIYNASHPIYKCMNCDVQADIGMVDSRRSSIVFQHEMRAANVNITSVLSPRVFQPA</sequence>
<protein>
    <recommendedName>
        <fullName evidence="2">DNA-directed RNA polymerase RPB2 homolog</fullName>
        <shortName evidence="3">RPB2 homolog</shortName>
        <ecNumber>2.7.7.6</ecNumber>
    </recommendedName>
</protein>
<dbReference type="EC" id="2.7.7.6"/>
<dbReference type="EMBL" id="AY261366">
    <property type="status" value="NOT_ANNOTATED_CDS"/>
    <property type="molecule type" value="Genomic_DNA"/>
</dbReference>
<dbReference type="SMR" id="P0C8K5"/>
<dbReference type="Proteomes" id="UP000000858">
    <property type="component" value="Segment"/>
</dbReference>
<dbReference type="GO" id="GO:0000428">
    <property type="term" value="C:DNA-directed RNA polymerase complex"/>
    <property type="evidence" value="ECO:0007669"/>
    <property type="project" value="UniProtKB-KW"/>
</dbReference>
<dbReference type="GO" id="GO:0030430">
    <property type="term" value="C:host cell cytoplasm"/>
    <property type="evidence" value="ECO:0007669"/>
    <property type="project" value="UniProtKB-SubCell"/>
</dbReference>
<dbReference type="GO" id="GO:0044423">
    <property type="term" value="C:virion component"/>
    <property type="evidence" value="ECO:0007669"/>
    <property type="project" value="UniProtKB-KW"/>
</dbReference>
<dbReference type="GO" id="GO:0003677">
    <property type="term" value="F:DNA binding"/>
    <property type="evidence" value="ECO:0007669"/>
    <property type="project" value="InterPro"/>
</dbReference>
<dbReference type="GO" id="GO:0003899">
    <property type="term" value="F:DNA-directed RNA polymerase activity"/>
    <property type="evidence" value="ECO:0007669"/>
    <property type="project" value="UniProtKB-EC"/>
</dbReference>
<dbReference type="GO" id="GO:0032549">
    <property type="term" value="F:ribonucleoside binding"/>
    <property type="evidence" value="ECO:0007669"/>
    <property type="project" value="InterPro"/>
</dbReference>
<dbReference type="GO" id="GO:0008270">
    <property type="term" value="F:zinc ion binding"/>
    <property type="evidence" value="ECO:0007669"/>
    <property type="project" value="UniProtKB-KW"/>
</dbReference>
<dbReference type="GO" id="GO:0006351">
    <property type="term" value="P:DNA-templated transcription"/>
    <property type="evidence" value="ECO:0007669"/>
    <property type="project" value="InterPro"/>
</dbReference>
<dbReference type="GO" id="GO:0019083">
    <property type="term" value="P:viral transcription"/>
    <property type="evidence" value="ECO:0007669"/>
    <property type="project" value="UniProtKB-KW"/>
</dbReference>
<dbReference type="Gene3D" id="2.40.50.150">
    <property type="match status" value="1"/>
</dbReference>
<dbReference type="Gene3D" id="3.90.1100.10">
    <property type="match status" value="2"/>
</dbReference>
<dbReference type="Gene3D" id="2.40.270.10">
    <property type="entry name" value="DNA-directed RNA polymerase, subunit 2, domain 6"/>
    <property type="match status" value="1"/>
</dbReference>
<dbReference type="Gene3D" id="3.90.1800.10">
    <property type="entry name" value="RNA polymerase alpha subunit dimerisation domain"/>
    <property type="match status" value="1"/>
</dbReference>
<dbReference type="Gene3D" id="3.90.1110.10">
    <property type="entry name" value="RNA polymerase Rpb2, domain 2"/>
    <property type="match status" value="1"/>
</dbReference>
<dbReference type="InterPro" id="IPR015712">
    <property type="entry name" value="DNA-dir_RNA_pol_su2"/>
</dbReference>
<dbReference type="InterPro" id="IPR007120">
    <property type="entry name" value="DNA-dir_RNAP_su2_dom"/>
</dbReference>
<dbReference type="InterPro" id="IPR037033">
    <property type="entry name" value="DNA-dir_RNAP_su2_hyb_sf"/>
</dbReference>
<dbReference type="InterPro" id="IPR007121">
    <property type="entry name" value="RNA_pol_bsu_CS"/>
</dbReference>
<dbReference type="InterPro" id="IPR007644">
    <property type="entry name" value="RNA_pol_bsu_protrusion"/>
</dbReference>
<dbReference type="InterPro" id="IPR007642">
    <property type="entry name" value="RNA_pol_Rpb2_2"/>
</dbReference>
<dbReference type="InterPro" id="IPR037034">
    <property type="entry name" value="RNA_pol_Rpb2_2_sf"/>
</dbReference>
<dbReference type="InterPro" id="IPR007645">
    <property type="entry name" value="RNA_pol_Rpb2_3"/>
</dbReference>
<dbReference type="InterPro" id="IPR007646">
    <property type="entry name" value="RNA_pol_Rpb2_4"/>
</dbReference>
<dbReference type="InterPro" id="IPR007641">
    <property type="entry name" value="RNA_pol_Rpb2_7"/>
</dbReference>
<dbReference type="InterPro" id="IPR014724">
    <property type="entry name" value="RNA_pol_RPB2_OB-fold"/>
</dbReference>
<dbReference type="PANTHER" id="PTHR20856">
    <property type="entry name" value="DNA-DIRECTED RNA POLYMERASE I SUBUNIT 2"/>
    <property type="match status" value="1"/>
</dbReference>
<dbReference type="Pfam" id="PF04563">
    <property type="entry name" value="RNA_pol_Rpb2_1"/>
    <property type="match status" value="1"/>
</dbReference>
<dbReference type="Pfam" id="PF04561">
    <property type="entry name" value="RNA_pol_Rpb2_2"/>
    <property type="match status" value="1"/>
</dbReference>
<dbReference type="Pfam" id="PF04565">
    <property type="entry name" value="RNA_pol_Rpb2_3"/>
    <property type="match status" value="1"/>
</dbReference>
<dbReference type="Pfam" id="PF04566">
    <property type="entry name" value="RNA_pol_Rpb2_4"/>
    <property type="match status" value="1"/>
</dbReference>
<dbReference type="Pfam" id="PF00562">
    <property type="entry name" value="RNA_pol_Rpb2_6"/>
    <property type="match status" value="1"/>
</dbReference>
<dbReference type="Pfam" id="PF04560">
    <property type="entry name" value="RNA_pol_Rpb2_7"/>
    <property type="match status" value="1"/>
</dbReference>
<dbReference type="SUPFAM" id="SSF64484">
    <property type="entry name" value="beta and beta-prime subunits of DNA dependent RNA-polymerase"/>
    <property type="match status" value="1"/>
</dbReference>
<dbReference type="PROSITE" id="PS01166">
    <property type="entry name" value="RNA_POL_BETA"/>
    <property type="match status" value="1"/>
</dbReference>
<proteinExistence type="inferred from homology"/>
<gene>
    <name type="ordered locus">War-063</name>
</gene>
<comment type="function">
    <text evidence="1">Catalytic component of the DNA-directed RNA polymerase (RNAP) that catalyzes the transcription in the cytoplasm of viral DNA into RNA using the four ribonucleoside triphosphates as substrates (By similarity). Forms the polymerase active center together with RPB1 (By similarity). Part of the core element with the central large cleft, the clamp element that moves to open and close the cleft and the jaws that are thought to grab the incoming DNA template (By similarity).</text>
</comment>
<comment type="catalytic activity">
    <reaction>
        <text>RNA(n) + a ribonucleoside 5'-triphosphate = RNA(n+1) + diphosphate</text>
        <dbReference type="Rhea" id="RHEA:21248"/>
        <dbReference type="Rhea" id="RHEA-COMP:14527"/>
        <dbReference type="Rhea" id="RHEA-COMP:17342"/>
        <dbReference type="ChEBI" id="CHEBI:33019"/>
        <dbReference type="ChEBI" id="CHEBI:61557"/>
        <dbReference type="ChEBI" id="CHEBI:140395"/>
        <dbReference type="EC" id="2.7.7.6"/>
    </reaction>
</comment>
<comment type="subunit">
    <text evidence="2">Part of the viral DNA-directed RNA polymerase that consists of 8 polII-like subunits (RPB1, RPB2, RPB3, RPB5, RPB6, RPB7, RPB9, RPB10), a capping enzyme and a termination factor.</text>
</comment>
<comment type="subcellular location">
    <subcellularLocation>
        <location evidence="3">Host cytoplasm</location>
    </subcellularLocation>
    <subcellularLocation>
        <location evidence="2">Virion</location>
    </subcellularLocation>
    <text evidence="2">Found in association with viral nucleoid.</text>
</comment>
<comment type="induction">
    <text evidence="3">Expressed in the late phase of the viral replicative cycle.</text>
</comment>
<comment type="miscellaneous">
    <text evidence="1">The binding of ribonucleoside triphosphate to the RNA polymerase transcribing complex probably involves a two-step mechanism. The initial binding seems to occur at the entry (E) site and involves a magnesium ion coordinated by three conserved aspartate residues of the two largest RNA Pol subunits.</text>
</comment>
<comment type="similarity">
    <text evidence="3">Belongs to the RNA polymerase beta chain family.</text>
</comment>
<feature type="chain" id="PRO_0000355628" description="DNA-directed RNA polymerase RPB2 homolog">
    <location>
        <begin position="1"/>
        <end position="1242"/>
    </location>
</feature>
<feature type="zinc finger region" description="C4-type">
    <location>
        <begin position="1180"/>
        <end position="1201"/>
    </location>
</feature>
<accession>P0C8K5</accession>
<reference key="1">
    <citation type="submission" date="2003-03" db="EMBL/GenBank/DDBJ databases">
        <title>African swine fever virus genomes.</title>
        <authorList>
            <person name="Kutish G.F."/>
            <person name="Rock D.L."/>
        </authorList>
    </citation>
    <scope>NUCLEOTIDE SEQUENCE [LARGE SCALE GENOMIC DNA]</scope>
</reference>
<keyword id="KW-0240">DNA-directed RNA polymerase</keyword>
<keyword id="KW-1035">Host cytoplasm</keyword>
<keyword id="KW-0426">Late protein</keyword>
<keyword id="KW-0479">Metal-binding</keyword>
<keyword id="KW-0548">Nucleotidyltransferase</keyword>
<keyword id="KW-0804">Transcription</keyword>
<keyword id="KW-0808">Transferase</keyword>
<keyword id="KW-1195">Viral transcription</keyword>
<keyword id="KW-0946">Virion</keyword>
<keyword id="KW-0862">Zinc</keyword>
<keyword id="KW-0863">Zinc-finger</keyword>